<feature type="signal peptide" evidence="1">
    <location>
        <begin position="1"/>
        <end position="24"/>
    </location>
</feature>
<feature type="chain" id="PRO_0000021009" description="Myeloid-derived growth factor">
    <location>
        <begin position="25"/>
        <end position="166"/>
    </location>
</feature>
<sequence>MAAPSGGFWTAVVLAAAALKLAAAVSEPTTVPFDVRPGGVVHSFSQDVGPGNKFTCTFTYASQGGTNEQWQMSLGTSEDSQHFTCTIWRPQGKSYLYFTQFKAELRGAEIEYAMAYSKAAFERESDVPLKSEEFEVTKTAVSHRPGAFKAELSKLVIVAKAARSEL</sequence>
<reference key="1">
    <citation type="journal article" date="2005" name="Science">
        <title>The transcriptional landscape of the mammalian genome.</title>
        <authorList>
            <person name="Carninci P."/>
            <person name="Kasukawa T."/>
            <person name="Katayama S."/>
            <person name="Gough J."/>
            <person name="Frith M.C."/>
            <person name="Maeda N."/>
            <person name="Oyama R."/>
            <person name="Ravasi T."/>
            <person name="Lenhard B."/>
            <person name="Wells C."/>
            <person name="Kodzius R."/>
            <person name="Shimokawa K."/>
            <person name="Bajic V.B."/>
            <person name="Brenner S.E."/>
            <person name="Batalov S."/>
            <person name="Forrest A.R."/>
            <person name="Zavolan M."/>
            <person name="Davis M.J."/>
            <person name="Wilming L.G."/>
            <person name="Aidinis V."/>
            <person name="Allen J.E."/>
            <person name="Ambesi-Impiombato A."/>
            <person name="Apweiler R."/>
            <person name="Aturaliya R.N."/>
            <person name="Bailey T.L."/>
            <person name="Bansal M."/>
            <person name="Baxter L."/>
            <person name="Beisel K.W."/>
            <person name="Bersano T."/>
            <person name="Bono H."/>
            <person name="Chalk A.M."/>
            <person name="Chiu K.P."/>
            <person name="Choudhary V."/>
            <person name="Christoffels A."/>
            <person name="Clutterbuck D.R."/>
            <person name="Crowe M.L."/>
            <person name="Dalla E."/>
            <person name="Dalrymple B.P."/>
            <person name="de Bono B."/>
            <person name="Della Gatta G."/>
            <person name="di Bernardo D."/>
            <person name="Down T."/>
            <person name="Engstrom P."/>
            <person name="Fagiolini M."/>
            <person name="Faulkner G."/>
            <person name="Fletcher C.F."/>
            <person name="Fukushima T."/>
            <person name="Furuno M."/>
            <person name="Futaki S."/>
            <person name="Gariboldi M."/>
            <person name="Georgii-Hemming P."/>
            <person name="Gingeras T.R."/>
            <person name="Gojobori T."/>
            <person name="Green R.E."/>
            <person name="Gustincich S."/>
            <person name="Harbers M."/>
            <person name="Hayashi Y."/>
            <person name="Hensch T.K."/>
            <person name="Hirokawa N."/>
            <person name="Hill D."/>
            <person name="Huminiecki L."/>
            <person name="Iacono M."/>
            <person name="Ikeo K."/>
            <person name="Iwama A."/>
            <person name="Ishikawa T."/>
            <person name="Jakt M."/>
            <person name="Kanapin A."/>
            <person name="Katoh M."/>
            <person name="Kawasawa Y."/>
            <person name="Kelso J."/>
            <person name="Kitamura H."/>
            <person name="Kitano H."/>
            <person name="Kollias G."/>
            <person name="Krishnan S.P."/>
            <person name="Kruger A."/>
            <person name="Kummerfeld S.K."/>
            <person name="Kurochkin I.V."/>
            <person name="Lareau L.F."/>
            <person name="Lazarevic D."/>
            <person name="Lipovich L."/>
            <person name="Liu J."/>
            <person name="Liuni S."/>
            <person name="McWilliam S."/>
            <person name="Madan Babu M."/>
            <person name="Madera M."/>
            <person name="Marchionni L."/>
            <person name="Matsuda H."/>
            <person name="Matsuzawa S."/>
            <person name="Miki H."/>
            <person name="Mignone F."/>
            <person name="Miyake S."/>
            <person name="Morris K."/>
            <person name="Mottagui-Tabar S."/>
            <person name="Mulder N."/>
            <person name="Nakano N."/>
            <person name="Nakauchi H."/>
            <person name="Ng P."/>
            <person name="Nilsson R."/>
            <person name="Nishiguchi S."/>
            <person name="Nishikawa S."/>
            <person name="Nori F."/>
            <person name="Ohara O."/>
            <person name="Okazaki Y."/>
            <person name="Orlando V."/>
            <person name="Pang K.C."/>
            <person name="Pavan W.J."/>
            <person name="Pavesi G."/>
            <person name="Pesole G."/>
            <person name="Petrovsky N."/>
            <person name="Piazza S."/>
            <person name="Reed J."/>
            <person name="Reid J.F."/>
            <person name="Ring B.Z."/>
            <person name="Ringwald M."/>
            <person name="Rost B."/>
            <person name="Ruan Y."/>
            <person name="Salzberg S.L."/>
            <person name="Sandelin A."/>
            <person name="Schneider C."/>
            <person name="Schoenbach C."/>
            <person name="Sekiguchi K."/>
            <person name="Semple C.A."/>
            <person name="Seno S."/>
            <person name="Sessa L."/>
            <person name="Sheng Y."/>
            <person name="Shibata Y."/>
            <person name="Shimada H."/>
            <person name="Shimada K."/>
            <person name="Silva D."/>
            <person name="Sinclair B."/>
            <person name="Sperling S."/>
            <person name="Stupka E."/>
            <person name="Sugiura K."/>
            <person name="Sultana R."/>
            <person name="Takenaka Y."/>
            <person name="Taki K."/>
            <person name="Tammoja K."/>
            <person name="Tan S.L."/>
            <person name="Tang S."/>
            <person name="Taylor M.S."/>
            <person name="Tegner J."/>
            <person name="Teichmann S.A."/>
            <person name="Ueda H.R."/>
            <person name="van Nimwegen E."/>
            <person name="Verardo R."/>
            <person name="Wei C.L."/>
            <person name="Yagi K."/>
            <person name="Yamanishi H."/>
            <person name="Zabarovsky E."/>
            <person name="Zhu S."/>
            <person name="Zimmer A."/>
            <person name="Hide W."/>
            <person name="Bult C."/>
            <person name="Grimmond S.M."/>
            <person name="Teasdale R.D."/>
            <person name="Liu E.T."/>
            <person name="Brusic V."/>
            <person name="Quackenbush J."/>
            <person name="Wahlestedt C."/>
            <person name="Mattick J.S."/>
            <person name="Hume D.A."/>
            <person name="Kai C."/>
            <person name="Sasaki D."/>
            <person name="Tomaru Y."/>
            <person name="Fukuda S."/>
            <person name="Kanamori-Katayama M."/>
            <person name="Suzuki M."/>
            <person name="Aoki J."/>
            <person name="Arakawa T."/>
            <person name="Iida J."/>
            <person name="Imamura K."/>
            <person name="Itoh M."/>
            <person name="Kato T."/>
            <person name="Kawaji H."/>
            <person name="Kawagashira N."/>
            <person name="Kawashima T."/>
            <person name="Kojima M."/>
            <person name="Kondo S."/>
            <person name="Konno H."/>
            <person name="Nakano K."/>
            <person name="Ninomiya N."/>
            <person name="Nishio T."/>
            <person name="Okada M."/>
            <person name="Plessy C."/>
            <person name="Shibata K."/>
            <person name="Shiraki T."/>
            <person name="Suzuki S."/>
            <person name="Tagami M."/>
            <person name="Waki K."/>
            <person name="Watahiki A."/>
            <person name="Okamura-Oho Y."/>
            <person name="Suzuki H."/>
            <person name="Kawai J."/>
            <person name="Hayashizaki Y."/>
        </authorList>
    </citation>
    <scope>NUCLEOTIDE SEQUENCE [LARGE SCALE MRNA]</scope>
    <source>
        <strain>C57BL/6J</strain>
        <tissue>Embryo</tissue>
        <tissue>Hypothalamus</tissue>
        <tissue>Small intestine</tissue>
        <tissue>Stomach</tissue>
        <tissue>Thymus</tissue>
    </source>
</reference>
<reference key="2">
    <citation type="journal article" date="2004" name="Genome Res.">
        <title>The status, quality, and expansion of the NIH full-length cDNA project: the Mammalian Gene Collection (MGC).</title>
        <authorList>
            <consortium name="The MGC Project Team"/>
        </authorList>
    </citation>
    <scope>NUCLEOTIDE SEQUENCE [LARGE SCALE MRNA]</scope>
    <source>
        <tissue>Brain</tissue>
    </source>
</reference>
<reference key="3">
    <citation type="journal article" date="2001" name="J. Immunol.">
        <title>SF20/IL-25, a novel bone marrow stroma-derived growth factor that binds to mouse thymic shared antigen-1 and supports lymphoid cell proliferation.</title>
        <authorList>
            <person name="Tulin E.E."/>
            <person name="Onoda N."/>
            <person name="Nakata Y."/>
            <person name="Maeda M."/>
            <person name="Hasegawa M."/>
            <person name="Nomura H."/>
            <person name="Kitamura T."/>
        </authorList>
    </citation>
    <scope>RETRACTED PAPER</scope>
    <source>
        <tissue>Bone marrow</tissue>
    </source>
</reference>
<reference key="4">
    <citation type="journal article" date="2003" name="J. Immunol.">
        <authorList>
            <person name="Tulin E.E."/>
            <person name="Onoda N."/>
            <person name="Nakata Y."/>
            <person name="Maeda M."/>
            <person name="Hasegawa M."/>
            <person name="Nomura H."/>
            <person name="Kitamura T."/>
        </authorList>
    </citation>
    <scope>RETRACTION NOTICE OF PUBMED:11714798</scope>
</reference>
<reference key="5">
    <citation type="journal article" date="2004" name="Cell. Mol. Life Sci.">
        <title>Profiling of the secreted proteins during 3T3-L1 adipocyte differentiation leads to the identification of novel adipokines.</title>
        <authorList>
            <person name="Wang P."/>
            <person name="Mariman E."/>
            <person name="Keijer J."/>
            <person name="Bouwman F."/>
            <person name="Noben J.P."/>
            <person name="Robben J."/>
            <person name="Renes J."/>
        </authorList>
    </citation>
    <scope>SUBCELLULAR LOCATION</scope>
    <scope>INDUCTION</scope>
    <scope>IDENTIFICATION BY MASS SPECTROMETRY</scope>
</reference>
<reference key="6">
    <citation type="journal article" date="2010" name="Cell">
        <title>A tissue-specific atlas of mouse protein phosphorylation and expression.</title>
        <authorList>
            <person name="Huttlin E.L."/>
            <person name="Jedrychowski M.P."/>
            <person name="Elias J.E."/>
            <person name="Goswami T."/>
            <person name="Rad R."/>
            <person name="Beausoleil S.A."/>
            <person name="Villen J."/>
            <person name="Haas W."/>
            <person name="Sowa M.E."/>
            <person name="Gygi S.P."/>
        </authorList>
    </citation>
    <scope>IDENTIFICATION BY MASS SPECTROMETRY [LARGE SCALE ANALYSIS]</scope>
    <source>
        <tissue>Brain</tissue>
        <tissue>Brown adipose tissue</tissue>
        <tissue>Heart</tissue>
        <tissue>Kidney</tissue>
        <tissue>Liver</tissue>
        <tissue>Lung</tissue>
        <tissue>Pancreas</tissue>
        <tissue>Spleen</tissue>
        <tissue>Testis</tissue>
    </source>
</reference>
<reference key="7">
    <citation type="journal article" date="2015" name="Nat. Med.">
        <title>Myeloid-derived growth factor (C19orf10) mediates cardiac repair following myocardial infarction.</title>
        <authorList>
            <person name="Korf-Klingebiel M."/>
            <person name="Reboll M.R."/>
            <person name="Klede S."/>
            <person name="Brod T."/>
            <person name="Pich A."/>
            <person name="Polten F."/>
            <person name="Napp L.C."/>
            <person name="Bauersachs J."/>
            <person name="Ganser A."/>
            <person name="Brinkmann E."/>
            <person name="Reimann I."/>
            <person name="Kempf T."/>
            <person name="Niessen H.W."/>
            <person name="Mizrahi J."/>
            <person name="Schoenfeld H.J."/>
            <person name="Iglesias A."/>
            <person name="Bobadilla M."/>
            <person name="Wang Y."/>
            <person name="Wollert K.C."/>
        </authorList>
    </citation>
    <scope>FUNCTION</scope>
    <scope>SUBCELLULAR LOCATION</scope>
    <scope>DISRUPTION PHENOTYPE</scope>
    <scope>TISSUE SPECIFICITY</scope>
</reference>
<proteinExistence type="evidence at protein level"/>
<name>MYDGF_MOUSE</name>
<dbReference type="EMBL" id="AY038184">
    <property type="protein sequence ID" value="AAK72580.1"/>
    <property type="molecule type" value="mRNA"/>
</dbReference>
<dbReference type="EMBL" id="AK004074">
    <property type="protein sequence ID" value="BAB23155.1"/>
    <property type="molecule type" value="mRNA"/>
</dbReference>
<dbReference type="EMBL" id="AK008289">
    <property type="protein sequence ID" value="BAB25579.1"/>
    <property type="molecule type" value="mRNA"/>
</dbReference>
<dbReference type="EMBL" id="AK008854">
    <property type="protein sequence ID" value="BAB25931.2"/>
    <property type="status" value="ALT_INIT"/>
    <property type="molecule type" value="mRNA"/>
</dbReference>
<dbReference type="EMBL" id="AK018016">
    <property type="protein sequence ID" value="BAB31038.1"/>
    <property type="molecule type" value="mRNA"/>
</dbReference>
<dbReference type="EMBL" id="AK133947">
    <property type="protein sequence ID" value="BAE21944.1"/>
    <property type="molecule type" value="mRNA"/>
</dbReference>
<dbReference type="EMBL" id="AK148083">
    <property type="protein sequence ID" value="BAE28335.1"/>
    <property type="molecule type" value="mRNA"/>
</dbReference>
<dbReference type="EMBL" id="AK162834">
    <property type="protein sequence ID" value="BAE37074.1"/>
    <property type="molecule type" value="mRNA"/>
</dbReference>
<dbReference type="EMBL" id="BC132127">
    <property type="protein sequence ID" value="AAI32128.1"/>
    <property type="molecule type" value="mRNA"/>
</dbReference>
<dbReference type="EMBL" id="BC132129">
    <property type="protein sequence ID" value="AAI32130.1"/>
    <property type="molecule type" value="mRNA"/>
</dbReference>
<dbReference type="CCDS" id="CCDS28898.1"/>
<dbReference type="RefSeq" id="NP_543027.1">
    <property type="nucleotide sequence ID" value="NM_080837.2"/>
</dbReference>
<dbReference type="SMR" id="Q9CPT4"/>
<dbReference type="BioGRID" id="205767">
    <property type="interactions" value="4"/>
</dbReference>
<dbReference type="FunCoup" id="Q9CPT4">
    <property type="interactions" value="874"/>
</dbReference>
<dbReference type="STRING" id="10090.ENSMUSP00000019723"/>
<dbReference type="PhosphoSitePlus" id="Q9CPT4"/>
<dbReference type="REPRODUCTION-2DPAGE" id="Q9CPT4"/>
<dbReference type="jPOST" id="Q9CPT4"/>
<dbReference type="PaxDb" id="10090-ENSMUSP00000019723"/>
<dbReference type="PeptideAtlas" id="Q9CPT4"/>
<dbReference type="ProteomicsDB" id="287652"/>
<dbReference type="Pumba" id="Q9CPT4"/>
<dbReference type="Antibodypedia" id="23698">
    <property type="antibodies" value="242 antibodies from 30 providers"/>
</dbReference>
<dbReference type="Ensembl" id="ENSMUST00000019723.8">
    <property type="protein sequence ID" value="ENSMUSP00000019723.8"/>
    <property type="gene ID" value="ENSMUSG00000019579.14"/>
</dbReference>
<dbReference type="GeneID" id="28106"/>
<dbReference type="KEGG" id="mmu:28106"/>
<dbReference type="UCSC" id="uc008dbg.1">
    <property type="organism name" value="mouse"/>
</dbReference>
<dbReference type="AGR" id="MGI:2156020"/>
<dbReference type="CTD" id="56005"/>
<dbReference type="MGI" id="MGI:2156020">
    <property type="gene designation" value="Mydgf"/>
</dbReference>
<dbReference type="VEuPathDB" id="HostDB:ENSMUSG00000019579"/>
<dbReference type="eggNOG" id="ENOG502RZK9">
    <property type="taxonomic scope" value="Eukaryota"/>
</dbReference>
<dbReference type="GeneTree" id="ENSGT00390000000777"/>
<dbReference type="HOGENOM" id="CLU_132160_0_0_1"/>
<dbReference type="InParanoid" id="Q9CPT4"/>
<dbReference type="OMA" id="CIFTYAS"/>
<dbReference type="OrthoDB" id="10061830at2759"/>
<dbReference type="PhylomeDB" id="Q9CPT4"/>
<dbReference type="TreeFam" id="TF332795"/>
<dbReference type="BioGRID-ORCS" id="28106">
    <property type="hits" value="3 hits in 81 CRISPR screens"/>
</dbReference>
<dbReference type="ChiTaRS" id="Mydgf">
    <property type="organism name" value="mouse"/>
</dbReference>
<dbReference type="PRO" id="PR:Q9CPT4"/>
<dbReference type="Proteomes" id="UP000000589">
    <property type="component" value="Chromosome 17"/>
</dbReference>
<dbReference type="RNAct" id="Q9CPT4">
    <property type="molecule type" value="protein"/>
</dbReference>
<dbReference type="Bgee" id="ENSMUSG00000019579">
    <property type="expression patterns" value="Expressed in ascending aorta and 266 other cell types or tissues"/>
</dbReference>
<dbReference type="GO" id="GO:0005783">
    <property type="term" value="C:endoplasmic reticulum"/>
    <property type="evidence" value="ECO:0000250"/>
    <property type="project" value="UniProtKB"/>
</dbReference>
<dbReference type="GO" id="GO:0005793">
    <property type="term" value="C:endoplasmic reticulum-Golgi intermediate compartment"/>
    <property type="evidence" value="ECO:0007669"/>
    <property type="project" value="UniProtKB-SubCell"/>
</dbReference>
<dbReference type="GO" id="GO:0005576">
    <property type="term" value="C:extracellular region"/>
    <property type="evidence" value="ECO:0000314"/>
    <property type="project" value="UniProtKB"/>
</dbReference>
<dbReference type="GO" id="GO:0005615">
    <property type="term" value="C:extracellular space"/>
    <property type="evidence" value="ECO:0000314"/>
    <property type="project" value="UniProtKB"/>
</dbReference>
<dbReference type="GO" id="GO:0005794">
    <property type="term" value="C:Golgi apparatus"/>
    <property type="evidence" value="ECO:0000250"/>
    <property type="project" value="UniProtKB"/>
</dbReference>
<dbReference type="GO" id="GO:0001525">
    <property type="term" value="P:angiogenesis"/>
    <property type="evidence" value="ECO:0007669"/>
    <property type="project" value="UniProtKB-KW"/>
</dbReference>
<dbReference type="GO" id="GO:0006915">
    <property type="term" value="P:apoptotic process"/>
    <property type="evidence" value="ECO:0007669"/>
    <property type="project" value="UniProtKB-KW"/>
</dbReference>
<dbReference type="GO" id="GO:0043066">
    <property type="term" value="P:negative regulation of apoptotic process"/>
    <property type="evidence" value="ECO:0000314"/>
    <property type="project" value="UniProtKB"/>
</dbReference>
<dbReference type="GO" id="GO:0045766">
    <property type="term" value="P:positive regulation of angiogenesis"/>
    <property type="evidence" value="ECO:0000314"/>
    <property type="project" value="UniProtKB"/>
</dbReference>
<dbReference type="GO" id="GO:0001938">
    <property type="term" value="P:positive regulation of endothelial cell proliferation"/>
    <property type="evidence" value="ECO:0000314"/>
    <property type="project" value="UniProtKB"/>
</dbReference>
<dbReference type="GO" id="GO:0043410">
    <property type="term" value="P:positive regulation of MAPK cascade"/>
    <property type="evidence" value="ECO:0000314"/>
    <property type="project" value="UniProtKB"/>
</dbReference>
<dbReference type="GO" id="GO:0051897">
    <property type="term" value="P:positive regulation of phosphatidylinositol 3-kinase/protein kinase B signal transduction"/>
    <property type="evidence" value="ECO:0000314"/>
    <property type="project" value="UniProtKB"/>
</dbReference>
<dbReference type="GO" id="GO:0001934">
    <property type="term" value="P:positive regulation of protein phosphorylation"/>
    <property type="evidence" value="ECO:0000314"/>
    <property type="project" value="UniProtKB"/>
</dbReference>
<dbReference type="GO" id="GO:0045944">
    <property type="term" value="P:positive regulation of transcription by RNA polymerase II"/>
    <property type="evidence" value="ECO:0000314"/>
    <property type="project" value="UniProtKB"/>
</dbReference>
<dbReference type="InterPro" id="IPR018887">
    <property type="entry name" value="MYDGF"/>
</dbReference>
<dbReference type="PANTHER" id="PTHR31230:SF1">
    <property type="entry name" value="MYELOID-DERIVED GROWTH FACTOR"/>
    <property type="match status" value="1"/>
</dbReference>
<dbReference type="PANTHER" id="PTHR31230">
    <property type="entry name" value="MYELOID-DERIVED GROWTH FACTOR MYDGF"/>
    <property type="match status" value="1"/>
</dbReference>
<dbReference type="Pfam" id="PF10572">
    <property type="entry name" value="UPF0556"/>
    <property type="match status" value="1"/>
</dbReference>
<gene>
    <name evidence="4" type="primary">Mydgf</name>
    <name evidence="8" type="synonym">D17Wsu104e</name>
</gene>
<protein>
    <recommendedName>
        <fullName evidence="4">Myeloid-derived growth factor</fullName>
        <shortName evidence="4">MYDGF</shortName>
    </recommendedName>
</protein>
<keyword id="KW-0037">Angiogenesis</keyword>
<keyword id="KW-0053">Apoptosis</keyword>
<keyword id="KW-0256">Endoplasmic reticulum</keyword>
<keyword id="KW-0333">Golgi apparatus</keyword>
<keyword id="KW-1185">Reference proteome</keyword>
<keyword id="KW-0964">Secreted</keyword>
<keyword id="KW-0732">Signal</keyword>
<evidence type="ECO:0000250" key="1">
    <source>
        <dbReference type="UniProtKB" id="Q969H8"/>
    </source>
</evidence>
<evidence type="ECO:0000269" key="2">
    <source>
    </source>
</evidence>
<evidence type="ECO:0000269" key="3">
    <source>
    </source>
</evidence>
<evidence type="ECO:0000303" key="4">
    <source>
    </source>
</evidence>
<evidence type="ECO:0000305" key="5"/>
<evidence type="ECO:0000305" key="6">
    <source>
    </source>
</evidence>
<evidence type="ECO:0000305" key="7">
    <source>
    </source>
</evidence>
<evidence type="ECO:0000312" key="8">
    <source>
        <dbReference type="MGI" id="MGI:2156020"/>
    </source>
</evidence>
<accession>Q9CPT4</accession>
<accession>A2RSI7</accession>
<accession>Q3UG74</accession>
<organism>
    <name type="scientific">Mus musculus</name>
    <name type="common">Mouse</name>
    <dbReference type="NCBI Taxonomy" id="10090"/>
    <lineage>
        <taxon>Eukaryota</taxon>
        <taxon>Metazoa</taxon>
        <taxon>Chordata</taxon>
        <taxon>Craniata</taxon>
        <taxon>Vertebrata</taxon>
        <taxon>Euteleostomi</taxon>
        <taxon>Mammalia</taxon>
        <taxon>Eutheria</taxon>
        <taxon>Euarchontoglires</taxon>
        <taxon>Glires</taxon>
        <taxon>Rodentia</taxon>
        <taxon>Myomorpha</taxon>
        <taxon>Muroidea</taxon>
        <taxon>Muridae</taxon>
        <taxon>Murinae</taxon>
        <taxon>Mus</taxon>
        <taxon>Mus</taxon>
    </lineage>
</organism>
<comment type="function">
    <text evidence="3">Bone marrow-derived monocyte and paracrine-acting protein that promotes cardiac myocyte survival and adaptive angiogenesis for cardiac protection and/or repair after myocardial infarction (MI). Stimulates endothelial cell proliferation through a MAPK1/3-, STAT3- and CCND1-mediated signaling pathway. Inhibits cardiac myocyte apoptosis in a PI3K/AKT-dependent signaling pathway.</text>
</comment>
<comment type="subcellular location">
    <subcellularLocation>
        <location evidence="2 3">Secreted</location>
    </subcellularLocation>
    <subcellularLocation>
        <location evidence="1">Endoplasmic reticulum-Golgi intermediate compartment</location>
    </subcellularLocation>
    <subcellularLocation>
        <location evidence="1">Endoplasmic reticulum</location>
    </subcellularLocation>
    <subcellularLocation>
        <location evidence="1">Golgi apparatus</location>
    </subcellularLocation>
    <text evidence="1">The C-terminal RTEL motif may provide retention in the endoplasmic reticulum.</text>
</comment>
<comment type="tissue specificity">
    <text evidence="3">Expressed in prostate, spleen and lung, and weakly expressed in the left ventricle (LF) and liver. Expressed predominantly in inflammatory cells, such as monocytes and macrophages, and weakly expressed in neutrophils, T-cells, B-cells, endothelial cells and cardiac myocytes, after myocardial infarction (MI) (at protein level).</text>
</comment>
<comment type="induction">
    <text evidence="2 3">Up-regulated by ischemia/hypoxia and reperfusion (IR) injury in the left ventricle (at protein level) (PubMed:25581518). Up-regulated during adipocyte differentiation (at protein level) (PubMed:15378209).</text>
</comment>
<comment type="disruption phenotype">
    <text evidence="3">Mice show normal postnatal body mass gain, develop normally and are fertile. Show larger infarct collagen-rich scars and more severe heart contractile dysfunction compared to wild-type mice after ischemia and reperfusion (IR) injury.</text>
</comment>
<comment type="similarity">
    <text evidence="5">Belongs to the MYDGF family.</text>
</comment>
<comment type="caution">
    <text evidence="6 7">Was originally thought to signal lymphoid cells to proliferate via thymic shared antigen 1 (PubMed:11714798). This work was later retracted (PubMed:12538725).</text>
</comment>
<comment type="caution">
    <text evidence="1 2 3">It has been reported that MYDGF is secreted into blood plasma (PubMed:15378209, PubMed:25581518). However, another report studying human MYDGF shows resident localization to the endoplasmic reticulum and Golgi apparatus and secretion when the two most C-terminal residues of the RTEL motif are abolished (By similarity).</text>
</comment>
<comment type="sequence caution" evidence="5">
    <conflict type="erroneous initiation">
        <sequence resource="EMBL-CDS" id="BAB25931"/>
    </conflict>
</comment>